<reference key="1">
    <citation type="journal article" date="2009" name="PLoS Genet.">
        <title>Organised genome dynamics in the Escherichia coli species results in highly diverse adaptive paths.</title>
        <authorList>
            <person name="Touchon M."/>
            <person name="Hoede C."/>
            <person name="Tenaillon O."/>
            <person name="Barbe V."/>
            <person name="Baeriswyl S."/>
            <person name="Bidet P."/>
            <person name="Bingen E."/>
            <person name="Bonacorsi S."/>
            <person name="Bouchier C."/>
            <person name="Bouvet O."/>
            <person name="Calteau A."/>
            <person name="Chiapello H."/>
            <person name="Clermont O."/>
            <person name="Cruveiller S."/>
            <person name="Danchin A."/>
            <person name="Diard M."/>
            <person name="Dossat C."/>
            <person name="Karoui M.E."/>
            <person name="Frapy E."/>
            <person name="Garry L."/>
            <person name="Ghigo J.M."/>
            <person name="Gilles A.M."/>
            <person name="Johnson J."/>
            <person name="Le Bouguenec C."/>
            <person name="Lescat M."/>
            <person name="Mangenot S."/>
            <person name="Martinez-Jehanne V."/>
            <person name="Matic I."/>
            <person name="Nassif X."/>
            <person name="Oztas S."/>
            <person name="Petit M.A."/>
            <person name="Pichon C."/>
            <person name="Rouy Z."/>
            <person name="Ruf C.S."/>
            <person name="Schneider D."/>
            <person name="Tourret J."/>
            <person name="Vacherie B."/>
            <person name="Vallenet D."/>
            <person name="Medigue C."/>
            <person name="Rocha E.P.C."/>
            <person name="Denamur E."/>
        </authorList>
    </citation>
    <scope>NUCLEOTIDE SEQUENCE [LARGE SCALE GENOMIC DNA]</scope>
    <source>
        <strain>S88 / ExPEC</strain>
    </source>
</reference>
<organism>
    <name type="scientific">Escherichia coli O45:K1 (strain S88 / ExPEC)</name>
    <dbReference type="NCBI Taxonomy" id="585035"/>
    <lineage>
        <taxon>Bacteria</taxon>
        <taxon>Pseudomonadati</taxon>
        <taxon>Pseudomonadota</taxon>
        <taxon>Gammaproteobacteria</taxon>
        <taxon>Enterobacterales</taxon>
        <taxon>Enterobacteriaceae</taxon>
        <taxon>Escherichia</taxon>
    </lineage>
</organism>
<comment type="function">
    <text evidence="1">Negatively regulates its own expression and that of the subsequent genes in the proximal part of the division and cell wall (dcw) gene cluster. Acts by binding directly to DNA. May also regulate the expression of genes outside the dcw cluster.</text>
</comment>
<comment type="subunit">
    <text evidence="1">Forms oligomers.</text>
</comment>
<comment type="subcellular location">
    <subcellularLocation>
        <location evidence="1">Cytoplasm</location>
        <location evidence="1">Nucleoid</location>
    </subcellularLocation>
</comment>
<comment type="similarity">
    <text evidence="1">Belongs to the MraZ family.</text>
</comment>
<protein>
    <recommendedName>
        <fullName>Transcriptional regulator MraZ</fullName>
    </recommendedName>
</protein>
<keyword id="KW-0963">Cytoplasm</keyword>
<keyword id="KW-0238">DNA-binding</keyword>
<keyword id="KW-1185">Reference proteome</keyword>
<keyword id="KW-0677">Repeat</keyword>
<keyword id="KW-0678">Repressor</keyword>
<keyword id="KW-0804">Transcription</keyword>
<keyword id="KW-0805">Transcription regulation</keyword>
<evidence type="ECO:0000255" key="1">
    <source>
        <dbReference type="HAMAP-Rule" id="MF_01008"/>
    </source>
</evidence>
<evidence type="ECO:0000255" key="2">
    <source>
        <dbReference type="PROSITE-ProRule" id="PRU01076"/>
    </source>
</evidence>
<feature type="chain" id="PRO_1000134789" description="Transcriptional regulator MraZ">
    <location>
        <begin position="1"/>
        <end position="152"/>
    </location>
</feature>
<feature type="domain" description="SpoVT-AbrB 1" evidence="2">
    <location>
        <begin position="5"/>
        <end position="52"/>
    </location>
</feature>
<feature type="domain" description="SpoVT-AbrB 2" evidence="2">
    <location>
        <begin position="81"/>
        <end position="124"/>
    </location>
</feature>
<proteinExistence type="inferred from homology"/>
<accession>B7MAK4</accession>
<sequence>MFRGATLVNLDSKGRLSVPTRYREQLLENAAGQMVCTIDIHHPCLLLYPLPEWEIIEQKLSRLSSMNPVERRVQRLLLGHASECQMDGAGRLLIAPVLRQHAGLTKEVMLVGQFNKFELWDETTWHQQVKEDIDAEQLATGDLSERLQDLSL</sequence>
<gene>
    <name evidence="1" type="primary">mraZ</name>
    <name type="ordered locus">ECS88_0084</name>
</gene>
<dbReference type="EMBL" id="CU928161">
    <property type="protein sequence ID" value="CAR01450.1"/>
    <property type="molecule type" value="Genomic_DNA"/>
</dbReference>
<dbReference type="RefSeq" id="WP_001295770.1">
    <property type="nucleotide sequence ID" value="NC_011742.1"/>
</dbReference>
<dbReference type="SMR" id="B7MAK4"/>
<dbReference type="GeneID" id="75202102"/>
<dbReference type="KEGG" id="ecz:ECS88_0084"/>
<dbReference type="HOGENOM" id="CLU_107907_2_0_6"/>
<dbReference type="Proteomes" id="UP000000747">
    <property type="component" value="Chromosome"/>
</dbReference>
<dbReference type="GO" id="GO:0005737">
    <property type="term" value="C:cytoplasm"/>
    <property type="evidence" value="ECO:0007669"/>
    <property type="project" value="UniProtKB-UniRule"/>
</dbReference>
<dbReference type="GO" id="GO:0009295">
    <property type="term" value="C:nucleoid"/>
    <property type="evidence" value="ECO:0007669"/>
    <property type="project" value="UniProtKB-SubCell"/>
</dbReference>
<dbReference type="GO" id="GO:0003700">
    <property type="term" value="F:DNA-binding transcription factor activity"/>
    <property type="evidence" value="ECO:0007669"/>
    <property type="project" value="UniProtKB-UniRule"/>
</dbReference>
<dbReference type="GO" id="GO:0000976">
    <property type="term" value="F:transcription cis-regulatory region binding"/>
    <property type="evidence" value="ECO:0007669"/>
    <property type="project" value="TreeGrafter"/>
</dbReference>
<dbReference type="GO" id="GO:2000143">
    <property type="term" value="P:negative regulation of DNA-templated transcription initiation"/>
    <property type="evidence" value="ECO:0007669"/>
    <property type="project" value="TreeGrafter"/>
</dbReference>
<dbReference type="CDD" id="cd16321">
    <property type="entry name" value="MraZ_C"/>
    <property type="match status" value="1"/>
</dbReference>
<dbReference type="CDD" id="cd16320">
    <property type="entry name" value="MraZ_N"/>
    <property type="match status" value="1"/>
</dbReference>
<dbReference type="FunFam" id="3.40.1550.20:FF:000001">
    <property type="entry name" value="Transcriptional regulator MraZ"/>
    <property type="match status" value="1"/>
</dbReference>
<dbReference type="Gene3D" id="3.40.1550.20">
    <property type="entry name" value="Transcriptional regulator MraZ domain"/>
    <property type="match status" value="1"/>
</dbReference>
<dbReference type="HAMAP" id="MF_01008">
    <property type="entry name" value="MraZ"/>
    <property type="match status" value="1"/>
</dbReference>
<dbReference type="InterPro" id="IPR003444">
    <property type="entry name" value="MraZ"/>
</dbReference>
<dbReference type="InterPro" id="IPR035644">
    <property type="entry name" value="MraZ_C"/>
</dbReference>
<dbReference type="InterPro" id="IPR020603">
    <property type="entry name" value="MraZ_dom"/>
</dbReference>
<dbReference type="InterPro" id="IPR035642">
    <property type="entry name" value="MraZ_N"/>
</dbReference>
<dbReference type="InterPro" id="IPR038619">
    <property type="entry name" value="MraZ_sf"/>
</dbReference>
<dbReference type="InterPro" id="IPR007159">
    <property type="entry name" value="SpoVT-AbrB_dom"/>
</dbReference>
<dbReference type="InterPro" id="IPR037914">
    <property type="entry name" value="SpoVT-AbrB_sf"/>
</dbReference>
<dbReference type="NCBIfam" id="TIGR00242">
    <property type="entry name" value="division/cell wall cluster transcriptional repressor MraZ"/>
    <property type="match status" value="1"/>
</dbReference>
<dbReference type="PANTHER" id="PTHR34701">
    <property type="entry name" value="TRANSCRIPTIONAL REGULATOR MRAZ"/>
    <property type="match status" value="1"/>
</dbReference>
<dbReference type="PANTHER" id="PTHR34701:SF1">
    <property type="entry name" value="TRANSCRIPTIONAL REGULATOR MRAZ"/>
    <property type="match status" value="1"/>
</dbReference>
<dbReference type="Pfam" id="PF02381">
    <property type="entry name" value="MraZ"/>
    <property type="match status" value="2"/>
</dbReference>
<dbReference type="SUPFAM" id="SSF89447">
    <property type="entry name" value="AbrB/MazE/MraZ-like"/>
    <property type="match status" value="1"/>
</dbReference>
<dbReference type="PROSITE" id="PS51740">
    <property type="entry name" value="SPOVT_ABRB"/>
    <property type="match status" value="2"/>
</dbReference>
<name>MRAZ_ECO45</name>